<reference key="1">
    <citation type="journal article" date="1997" name="Nature">
        <title>The complete genome sequence of the Gram-positive bacterium Bacillus subtilis.</title>
        <authorList>
            <person name="Kunst F."/>
            <person name="Ogasawara N."/>
            <person name="Moszer I."/>
            <person name="Albertini A.M."/>
            <person name="Alloni G."/>
            <person name="Azevedo V."/>
            <person name="Bertero M.G."/>
            <person name="Bessieres P."/>
            <person name="Bolotin A."/>
            <person name="Borchert S."/>
            <person name="Borriss R."/>
            <person name="Boursier L."/>
            <person name="Brans A."/>
            <person name="Braun M."/>
            <person name="Brignell S.C."/>
            <person name="Bron S."/>
            <person name="Brouillet S."/>
            <person name="Bruschi C.V."/>
            <person name="Caldwell B."/>
            <person name="Capuano V."/>
            <person name="Carter N.M."/>
            <person name="Choi S.-K."/>
            <person name="Codani J.-J."/>
            <person name="Connerton I.F."/>
            <person name="Cummings N.J."/>
            <person name="Daniel R.A."/>
            <person name="Denizot F."/>
            <person name="Devine K.M."/>
            <person name="Duesterhoeft A."/>
            <person name="Ehrlich S.D."/>
            <person name="Emmerson P.T."/>
            <person name="Entian K.-D."/>
            <person name="Errington J."/>
            <person name="Fabret C."/>
            <person name="Ferrari E."/>
            <person name="Foulger D."/>
            <person name="Fritz C."/>
            <person name="Fujita M."/>
            <person name="Fujita Y."/>
            <person name="Fuma S."/>
            <person name="Galizzi A."/>
            <person name="Galleron N."/>
            <person name="Ghim S.-Y."/>
            <person name="Glaser P."/>
            <person name="Goffeau A."/>
            <person name="Golightly E.J."/>
            <person name="Grandi G."/>
            <person name="Guiseppi G."/>
            <person name="Guy B.J."/>
            <person name="Haga K."/>
            <person name="Haiech J."/>
            <person name="Harwood C.R."/>
            <person name="Henaut A."/>
            <person name="Hilbert H."/>
            <person name="Holsappel S."/>
            <person name="Hosono S."/>
            <person name="Hullo M.-F."/>
            <person name="Itaya M."/>
            <person name="Jones L.-M."/>
            <person name="Joris B."/>
            <person name="Karamata D."/>
            <person name="Kasahara Y."/>
            <person name="Klaerr-Blanchard M."/>
            <person name="Klein C."/>
            <person name="Kobayashi Y."/>
            <person name="Koetter P."/>
            <person name="Koningstein G."/>
            <person name="Krogh S."/>
            <person name="Kumano M."/>
            <person name="Kurita K."/>
            <person name="Lapidus A."/>
            <person name="Lardinois S."/>
            <person name="Lauber J."/>
            <person name="Lazarevic V."/>
            <person name="Lee S.-M."/>
            <person name="Levine A."/>
            <person name="Liu H."/>
            <person name="Masuda S."/>
            <person name="Mauel C."/>
            <person name="Medigue C."/>
            <person name="Medina N."/>
            <person name="Mellado R.P."/>
            <person name="Mizuno M."/>
            <person name="Moestl D."/>
            <person name="Nakai S."/>
            <person name="Noback M."/>
            <person name="Noone D."/>
            <person name="O'Reilly M."/>
            <person name="Ogawa K."/>
            <person name="Ogiwara A."/>
            <person name="Oudega B."/>
            <person name="Park S.-H."/>
            <person name="Parro V."/>
            <person name="Pohl T.M."/>
            <person name="Portetelle D."/>
            <person name="Porwollik S."/>
            <person name="Prescott A.M."/>
            <person name="Presecan E."/>
            <person name="Pujic P."/>
            <person name="Purnelle B."/>
            <person name="Rapoport G."/>
            <person name="Rey M."/>
            <person name="Reynolds S."/>
            <person name="Rieger M."/>
            <person name="Rivolta C."/>
            <person name="Rocha E."/>
            <person name="Roche B."/>
            <person name="Rose M."/>
            <person name="Sadaie Y."/>
            <person name="Sato T."/>
            <person name="Scanlan E."/>
            <person name="Schleich S."/>
            <person name="Schroeter R."/>
            <person name="Scoffone F."/>
            <person name="Sekiguchi J."/>
            <person name="Sekowska A."/>
            <person name="Seror S.J."/>
            <person name="Serror P."/>
            <person name="Shin B.-S."/>
            <person name="Soldo B."/>
            <person name="Sorokin A."/>
            <person name="Tacconi E."/>
            <person name="Takagi T."/>
            <person name="Takahashi H."/>
            <person name="Takemaru K."/>
            <person name="Takeuchi M."/>
            <person name="Tamakoshi A."/>
            <person name="Tanaka T."/>
            <person name="Terpstra P."/>
            <person name="Tognoni A."/>
            <person name="Tosato V."/>
            <person name="Uchiyama S."/>
            <person name="Vandenbol M."/>
            <person name="Vannier F."/>
            <person name="Vassarotti A."/>
            <person name="Viari A."/>
            <person name="Wambutt R."/>
            <person name="Wedler E."/>
            <person name="Wedler H."/>
            <person name="Weitzenegger T."/>
            <person name="Winters P."/>
            <person name="Wipat A."/>
            <person name="Yamamoto H."/>
            <person name="Yamane K."/>
            <person name="Yasumoto K."/>
            <person name="Yata K."/>
            <person name="Yoshida K."/>
            <person name="Yoshikawa H.-F."/>
            <person name="Zumstein E."/>
            <person name="Yoshikawa H."/>
            <person name="Danchin A."/>
        </authorList>
    </citation>
    <scope>NUCLEOTIDE SEQUENCE [LARGE SCALE GENOMIC DNA]</scope>
    <source>
        <strain>168</strain>
    </source>
</reference>
<reference key="2">
    <citation type="journal article" date="1997" name="Electrophoresis">
        <title>First steps from a two-dimensional protein index towards a response-regulation map for Bacillus subtilis.</title>
        <authorList>
            <person name="Antelmann H."/>
            <person name="Bernhardt J."/>
            <person name="Schmid R."/>
            <person name="Mach H."/>
            <person name="Voelker U."/>
            <person name="Hecker M."/>
        </authorList>
    </citation>
    <scope>PROTEIN SEQUENCE OF 2-28</scope>
    <source>
        <strain>168 / IS58</strain>
    </source>
</reference>
<reference key="3">
    <citation type="journal article" date="1994" name="Microbiology">
        <title>Analysis of the induction of general stress proteins of Bacillus subtilis.</title>
        <authorList>
            <person name="Voelker U."/>
            <person name="Engelmann S."/>
            <person name="Maul B."/>
            <person name="Riethdorf S."/>
            <person name="Voelker A."/>
            <person name="Schmid R."/>
            <person name="Mach H."/>
            <person name="Hecker M."/>
        </authorList>
    </citation>
    <scope>PRELIMINARY PROTEIN SEQUENCE OF 2-18</scope>
    <source>
        <strain>168 / IS58</strain>
    </source>
</reference>
<dbReference type="EMBL" id="AL009126">
    <property type="protein sequence ID" value="CAB14674.1"/>
    <property type="molecule type" value="Genomic_DNA"/>
</dbReference>
<dbReference type="PIR" id="A69637">
    <property type="entry name" value="A69637"/>
</dbReference>
<dbReference type="RefSeq" id="NP_390610.1">
    <property type="nucleotide sequence ID" value="NC_000964.3"/>
</dbReference>
<dbReference type="RefSeq" id="WP_004399078.1">
    <property type="nucleotide sequence ID" value="NZ_OZ025638.1"/>
</dbReference>
<dbReference type="SMR" id="P80240"/>
<dbReference type="FunCoup" id="P80240">
    <property type="interactions" value="384"/>
</dbReference>
<dbReference type="IntAct" id="P80240">
    <property type="interactions" value="1"/>
</dbReference>
<dbReference type="MINT" id="P80240"/>
<dbReference type="STRING" id="224308.BSU27320"/>
<dbReference type="jPOST" id="P80240"/>
<dbReference type="PaxDb" id="224308-BSU27320"/>
<dbReference type="EnsemblBacteria" id="CAB14674">
    <property type="protein sequence ID" value="CAB14674"/>
    <property type="gene ID" value="BSU_27320"/>
</dbReference>
<dbReference type="GeneID" id="86872758"/>
<dbReference type="GeneID" id="937565"/>
<dbReference type="KEGG" id="bsu:BSU27320"/>
<dbReference type="PATRIC" id="fig|224308.179.peg.2968"/>
<dbReference type="eggNOG" id="COG0782">
    <property type="taxonomic scope" value="Bacteria"/>
</dbReference>
<dbReference type="InParanoid" id="P80240"/>
<dbReference type="OrthoDB" id="9808774at2"/>
<dbReference type="PhylomeDB" id="P80240"/>
<dbReference type="BioCyc" id="BSUB:BSU27320-MONOMER"/>
<dbReference type="Proteomes" id="UP000001570">
    <property type="component" value="Chromosome"/>
</dbReference>
<dbReference type="GO" id="GO:0003677">
    <property type="term" value="F:DNA binding"/>
    <property type="evidence" value="ECO:0007669"/>
    <property type="project" value="UniProtKB-UniRule"/>
</dbReference>
<dbReference type="GO" id="GO:0070063">
    <property type="term" value="F:RNA polymerase binding"/>
    <property type="evidence" value="ECO:0007669"/>
    <property type="project" value="InterPro"/>
</dbReference>
<dbReference type="GO" id="GO:0006354">
    <property type="term" value="P:DNA-templated transcription elongation"/>
    <property type="evidence" value="ECO:0000318"/>
    <property type="project" value="GO_Central"/>
</dbReference>
<dbReference type="GO" id="GO:0032784">
    <property type="term" value="P:regulation of DNA-templated transcription elongation"/>
    <property type="evidence" value="ECO:0007669"/>
    <property type="project" value="UniProtKB-UniRule"/>
</dbReference>
<dbReference type="FunFam" id="1.10.287.180:FF:000001">
    <property type="entry name" value="Transcription elongation factor GreA"/>
    <property type="match status" value="1"/>
</dbReference>
<dbReference type="FunFam" id="3.10.50.30:FF:000001">
    <property type="entry name" value="Transcription elongation factor GreA"/>
    <property type="match status" value="1"/>
</dbReference>
<dbReference type="Gene3D" id="3.10.50.30">
    <property type="entry name" value="Transcription elongation factor, GreA/GreB, C-terminal domain"/>
    <property type="match status" value="1"/>
</dbReference>
<dbReference type="Gene3D" id="1.10.287.180">
    <property type="entry name" value="Transcription elongation factor, GreA/GreB, N-terminal domain"/>
    <property type="match status" value="1"/>
</dbReference>
<dbReference type="HAMAP" id="MF_00105">
    <property type="entry name" value="GreA_GreB"/>
    <property type="match status" value="1"/>
</dbReference>
<dbReference type="InterPro" id="IPR036953">
    <property type="entry name" value="GreA/GreB_C_sf"/>
</dbReference>
<dbReference type="InterPro" id="IPR018151">
    <property type="entry name" value="TF_GreA/GreB_CS"/>
</dbReference>
<dbReference type="InterPro" id="IPR006359">
    <property type="entry name" value="Tscrpt_elong_fac_GreA"/>
</dbReference>
<dbReference type="InterPro" id="IPR028624">
    <property type="entry name" value="Tscrpt_elong_fac_GreA/B"/>
</dbReference>
<dbReference type="InterPro" id="IPR001437">
    <property type="entry name" value="Tscrpt_elong_fac_GreA/B_C"/>
</dbReference>
<dbReference type="InterPro" id="IPR023459">
    <property type="entry name" value="Tscrpt_elong_fac_GreA/B_fam"/>
</dbReference>
<dbReference type="InterPro" id="IPR022691">
    <property type="entry name" value="Tscrpt_elong_fac_GreA/B_N"/>
</dbReference>
<dbReference type="InterPro" id="IPR036805">
    <property type="entry name" value="Tscrpt_elong_fac_GreA/B_N_sf"/>
</dbReference>
<dbReference type="NCBIfam" id="TIGR01462">
    <property type="entry name" value="greA"/>
    <property type="match status" value="1"/>
</dbReference>
<dbReference type="NCBIfam" id="NF001263">
    <property type="entry name" value="PRK00226.1-4"/>
    <property type="match status" value="1"/>
</dbReference>
<dbReference type="PANTHER" id="PTHR30437">
    <property type="entry name" value="TRANSCRIPTION ELONGATION FACTOR GREA"/>
    <property type="match status" value="1"/>
</dbReference>
<dbReference type="PANTHER" id="PTHR30437:SF4">
    <property type="entry name" value="TRANSCRIPTION ELONGATION FACTOR GREA"/>
    <property type="match status" value="1"/>
</dbReference>
<dbReference type="Pfam" id="PF01272">
    <property type="entry name" value="GreA_GreB"/>
    <property type="match status" value="1"/>
</dbReference>
<dbReference type="Pfam" id="PF03449">
    <property type="entry name" value="GreA_GreB_N"/>
    <property type="match status" value="1"/>
</dbReference>
<dbReference type="PIRSF" id="PIRSF006092">
    <property type="entry name" value="GreA_GreB"/>
    <property type="match status" value="1"/>
</dbReference>
<dbReference type="SUPFAM" id="SSF54534">
    <property type="entry name" value="FKBP-like"/>
    <property type="match status" value="1"/>
</dbReference>
<dbReference type="SUPFAM" id="SSF46557">
    <property type="entry name" value="GreA transcript cleavage protein, N-terminal domain"/>
    <property type="match status" value="1"/>
</dbReference>
<dbReference type="PROSITE" id="PS00829">
    <property type="entry name" value="GREAB_1"/>
    <property type="match status" value="1"/>
</dbReference>
<dbReference type="PROSITE" id="PS00830">
    <property type="entry name" value="GREAB_2"/>
    <property type="match status" value="1"/>
</dbReference>
<evidence type="ECO:0000250" key="1"/>
<evidence type="ECO:0000255" key="2"/>
<evidence type="ECO:0000269" key="3">
    <source>
    </source>
</evidence>
<evidence type="ECO:0000305" key="4"/>
<keyword id="KW-0175">Coiled coil</keyword>
<keyword id="KW-0903">Direct protein sequencing</keyword>
<keyword id="KW-0238">DNA-binding</keyword>
<keyword id="KW-1185">Reference proteome</keyword>
<keyword id="KW-0346">Stress response</keyword>
<keyword id="KW-0804">Transcription</keyword>
<keyword id="KW-0805">Transcription regulation</keyword>
<comment type="function">
    <text evidence="1">Necessary for efficient RNA polymerase transcription elongation past template-encoded arresting sites. The arresting sites in DNA have the property of trapping a certain fraction of elongating RNA polymerases that pass through, resulting in locked ternary complexes. Cleavage of the nascent transcript by cleavage factors such as GreA or GreB allows the resumption of elongation from the new 3'terminus. GreA releases sequences of 2 to 3 nucleotides (By similarity).</text>
</comment>
<comment type="induction">
    <text>By heat shock, salt stress, oxidative stress, glucose limitation and oxygen limitation.</text>
</comment>
<comment type="similarity">
    <text evidence="4">Belongs to the GreA/GreB family.</text>
</comment>
<organism>
    <name type="scientific">Bacillus subtilis (strain 168)</name>
    <dbReference type="NCBI Taxonomy" id="224308"/>
    <lineage>
        <taxon>Bacteria</taxon>
        <taxon>Bacillati</taxon>
        <taxon>Bacillota</taxon>
        <taxon>Bacilli</taxon>
        <taxon>Bacillales</taxon>
        <taxon>Bacillaceae</taxon>
        <taxon>Bacillus</taxon>
    </lineage>
</organism>
<protein>
    <recommendedName>
        <fullName>Transcription elongation factor GreA</fullName>
    </recommendedName>
    <alternativeName>
        <fullName>General stress protein 20M</fullName>
        <shortName>GSP20M</shortName>
    </alternativeName>
    <alternativeName>
        <fullName>Transcript cleavage factor GreA</fullName>
    </alternativeName>
</protein>
<gene>
    <name type="primary">greA</name>
    <name type="ordered locus">BSU27320</name>
</gene>
<accession>P80240</accession>
<feature type="initiator methionine" description="Removed" evidence="3">
    <location>
        <position position="1"/>
    </location>
</feature>
<feature type="chain" id="PRO_0000176909" description="Transcription elongation factor GreA">
    <location>
        <begin position="2"/>
        <end position="157"/>
    </location>
</feature>
<feature type="coiled-coil region" evidence="2">
    <location>
        <begin position="50"/>
        <end position="70"/>
    </location>
</feature>
<name>GREA_BACSU</name>
<proteinExistence type="evidence at protein level"/>
<sequence>MAQEKVFPMTAEGKQKLEQELEYLKTVKRKEVVERIKIARSFGDLSENSEYDSAKEEQAFVEGRVTTLENMIRNAKIIEDDGGSNVVGLGKTVTFVELPDGDEESYTIVGSAEADPFEGKISNDSPIAKSLLGKKVDEEVTVQTPGGEMLVKIVKIS</sequence>